<sequence length="74" mass="8298">MSKFILLVCILLLTTNIVSAASKCGRHGDSCVSSSDCCPGTWCHTYANRCQVRITEEELMKQREKILGRKGKDY</sequence>
<feature type="signal peptide" evidence="2">
    <location>
        <begin position="1"/>
        <end position="20"/>
    </location>
</feature>
<feature type="chain" id="PRO_0000425185" description="Omega-conotoxin-like protein 1">
    <location>
        <begin position="21"/>
        <end position="74"/>
    </location>
</feature>
<feature type="disulfide bond" evidence="1">
    <location>
        <begin position="24"/>
        <end position="38"/>
    </location>
</feature>
<feature type="disulfide bond" evidence="1">
    <location>
        <begin position="31"/>
        <end position="43"/>
    </location>
</feature>
<feature type="disulfide bond" evidence="1">
    <location>
        <begin position="37"/>
        <end position="50"/>
    </location>
</feature>
<dbReference type="RefSeq" id="XP_006560077.1">
    <property type="nucleotide sequence ID" value="XM_006560014.2"/>
</dbReference>
<dbReference type="STRING" id="7460.H9KQJ7"/>
<dbReference type="PaxDb" id="7460-GB55030-PA"/>
<dbReference type="EnsemblMetazoa" id="XM_006560014">
    <property type="protein sequence ID" value="XP_006560077"/>
    <property type="gene ID" value="LOC725074"/>
</dbReference>
<dbReference type="GeneID" id="725074"/>
<dbReference type="KEGG" id="ame:725074"/>
<dbReference type="HOGENOM" id="CLU_180299_0_0_1"/>
<dbReference type="InParanoid" id="H9KQJ7"/>
<dbReference type="OMA" id="CGRHGDP"/>
<dbReference type="OrthoDB" id="7921538at2759"/>
<dbReference type="PhylomeDB" id="H9KQJ7"/>
<dbReference type="Proteomes" id="UP000005203">
    <property type="component" value="Linkage group LG5"/>
</dbReference>
<dbReference type="GO" id="GO:0099106">
    <property type="term" value="F:ion channel regulator activity"/>
    <property type="evidence" value="ECO:0007669"/>
    <property type="project" value="UniProtKB-KW"/>
</dbReference>
<dbReference type="GO" id="GO:0090729">
    <property type="term" value="F:toxin activity"/>
    <property type="evidence" value="ECO:0007669"/>
    <property type="project" value="UniProtKB-KW"/>
</dbReference>
<dbReference type="GO" id="GO:0042742">
    <property type="term" value="P:defense response to bacterium"/>
    <property type="evidence" value="ECO:0007669"/>
    <property type="project" value="UniProtKB-KW"/>
</dbReference>
<comment type="function">
    <text evidence="3">The impact of this protein on the neuronal activity of the honeybee brain is not known. It does not affect apparent movement or hatching of blowfly larvae. However, when injected into fish, it induces a strong reversible paralytic effect. In addition, the presence of this small peptide in the hemolymph of adult drones together with its induction after bacterial infection suggests that this peptide exhibits antibacterial activity. This peptide may act by inhibiting ion channels.</text>
</comment>
<comment type="tissue specificity">
    <text evidence="3 4">Highly expressed in brain. Is also found in hemolymph.</text>
</comment>
<comment type="domain">
    <text evidence="1">The presence of a 'disulfide through disulfide knot' structurally defines this protein as a knottin.</text>
</comment>
<name>OCLP1_APIME</name>
<proteinExistence type="evidence at transcript level"/>
<reference key="1">
    <citation type="submission" date="2010-11" db="EMBL/GenBank/DDBJ databases">
        <authorList>
            <consortium name="Honey bee genome project"/>
            <person name="Zhang L."/>
            <person name="Deng J."/>
            <person name="Wu Y.-Q."/>
            <person name="Kovar C."/>
            <person name="Aqrawi P."/>
            <person name="Bandaranaike D."/>
            <person name="Blankenburg K."/>
            <person name="Chen D."/>
            <person name="Denson S."/>
            <person name="Dinh H."/>
            <person name="Firestine M."/>
            <person name="Gross S."/>
            <person name="Han Y."/>
            <person name="Hernandez B."/>
            <person name="Holder M."/>
            <person name="Jackson L."/>
            <person name="Javaid M."/>
            <person name="Jing C."/>
            <person name="Jones J."/>
            <person name="Joshi V."/>
            <person name="Kamau G."/>
            <person name="Korchina V."/>
            <person name="Lee S."/>
            <person name="Lorensuhewa L."/>
            <person name="Mata R."/>
            <person name="Mathew T."/>
            <person name="Mims S."/>
            <person name="Ngo R."/>
            <person name="Nguyen L."/>
            <person name="Okwuonu G."/>
            <person name="Ongeri F."/>
            <person name="Osuji N."/>
            <person name="Pham C."/>
            <person name="Puazo M."/>
            <person name="Qu C."/>
            <person name="Quiroz J."/>
            <person name="Raj R."/>
            <person name="Rio Deiros D."/>
            <person name="Santibanez J."/>
            <person name="Scheel M."/>
            <person name="Scherer S."/>
            <person name="Vee V."/>
            <person name="Wang M."/>
            <person name="Xin Y."/>
            <person name="Richards S."/>
            <person name="Reid J.G."/>
            <person name="Newsham I."/>
            <person name="Worley K.C."/>
            <person name="Muzny D.M."/>
            <person name="Gibbs R."/>
        </authorList>
    </citation>
    <scope>NUCLEOTIDE SEQUENCE [LARGE SCALE GENOMIC DNA]</scope>
    <source>
        <strain>DH4</strain>
    </source>
</reference>
<reference key="2">
    <citation type="journal article" date="2007" name="J. Mol. Biol.">
        <title>Novel families of toxin-like peptides in insects and mammals: a computational approach.</title>
        <authorList>
            <person name="Kaplan N."/>
            <person name="Morpurgo N."/>
            <person name="Linial M."/>
        </authorList>
    </citation>
    <scope>TISSUE SPECIFICITY</scope>
    <scope>FUNCTION</scope>
    <scope>BIOASSAY</scope>
</reference>
<reference key="3">
    <citation type="journal article" date="2012" name="J. Exp. Biol.">
        <title>Honey bee drones maintain humoral immune competence throughout all life stages in the absence of vitellogenin production.</title>
        <authorList>
            <person name="Gatschenberger H."/>
            <person name="Gimple O."/>
            <person name="Tautz J."/>
            <person name="Beier H."/>
        </authorList>
    </citation>
    <scope>TISSUE SPECIFICITY</scope>
    <scope>POSSIBLE ANTIBACTERIAL ACTIVITY</scope>
</reference>
<reference key="4">
    <citation type="submission" date="2012-08" db="UniProtKB">
        <authorList>
            <consortium name="EnsemblMetazoa"/>
        </authorList>
    </citation>
    <scope>IDENTIFICATION</scope>
    <source>
        <strain>DH4</strain>
    </source>
</reference>
<organism>
    <name type="scientific">Apis mellifera</name>
    <name type="common">Honeybee</name>
    <dbReference type="NCBI Taxonomy" id="7460"/>
    <lineage>
        <taxon>Eukaryota</taxon>
        <taxon>Metazoa</taxon>
        <taxon>Ecdysozoa</taxon>
        <taxon>Arthropoda</taxon>
        <taxon>Hexapoda</taxon>
        <taxon>Insecta</taxon>
        <taxon>Pterygota</taxon>
        <taxon>Neoptera</taxon>
        <taxon>Endopterygota</taxon>
        <taxon>Hymenoptera</taxon>
        <taxon>Apocrita</taxon>
        <taxon>Aculeata</taxon>
        <taxon>Apoidea</taxon>
        <taxon>Anthophila</taxon>
        <taxon>Apidae</taxon>
        <taxon>Apis</taxon>
    </lineage>
</organism>
<keyword id="KW-0044">Antibiotic</keyword>
<keyword id="KW-0929">Antimicrobial</keyword>
<keyword id="KW-1015">Disulfide bond</keyword>
<keyword id="KW-0872">Ion channel impairing toxin</keyword>
<keyword id="KW-0960">Knottin</keyword>
<keyword id="KW-1185">Reference proteome</keyword>
<keyword id="KW-0732">Signal</keyword>
<keyword id="KW-0800">Toxin</keyword>
<protein>
    <recommendedName>
        <fullName>Omega-conotoxin-like protein 1</fullName>
        <shortName>OCLP1</shortName>
    </recommendedName>
</protein>
<evidence type="ECO:0000250" key="1"/>
<evidence type="ECO:0000255" key="2"/>
<evidence type="ECO:0000269" key="3">
    <source>
    </source>
</evidence>
<evidence type="ECO:0000269" key="4">
    <source>
    </source>
</evidence>
<accession>H9KQJ7</accession>